<comment type="function">
    <text evidence="1">Heterodimer: postsynaptic neurotoxin.</text>
</comment>
<comment type="function">
    <text evidence="1">Monomer: the acidic chain inhibits the basic phospholipase A2 of the complex.</text>
</comment>
<comment type="subunit">
    <text>Heterodimer of a weakly toxic basic protein having phospholipase A2 activity (B chain) and a non-toxic acidic protein functioning as its inhibitor but which potentiates its lethal potency and neurotoxicity (A chain).</text>
</comment>
<comment type="subcellular location">
    <subcellularLocation>
        <location evidence="4">Secreted</location>
    </subcellularLocation>
</comment>
<comment type="tissue specificity">
    <text evidence="6">Expressed by the venom gland.</text>
</comment>
<comment type="mass spectrometry" mass="13654.0" method="Electrospray" evidence="4"/>
<comment type="similarity">
    <text evidence="5">Belongs to the phospholipase A2 family. Group II subfamily. D49 sub-subfamily.</text>
</comment>
<name>PA2H_VIPAZ</name>
<keyword id="KW-0903">Direct protein sequencing</keyword>
<keyword id="KW-1015">Disulfide bond</keyword>
<keyword id="KW-0528">Neurotoxin</keyword>
<keyword id="KW-0593">Phospholipase A2 inhibitor</keyword>
<keyword id="KW-0629">Postsynaptic neurotoxin</keyword>
<keyword id="KW-0964">Secreted</keyword>
<keyword id="KW-0732">Signal</keyword>
<keyword id="KW-0800">Toxin</keyword>
<protein>
    <recommendedName>
        <fullName>Acidic phospholipase A2 inhibitor vaspin A chain</fullName>
        <shortName>VaspA</shortName>
        <shortName>svPLA2 homolog</shortName>
    </recommendedName>
    <alternativeName>
        <fullName>PLA2-I complex chain A</fullName>
    </alternativeName>
</protein>
<dbReference type="EMBL" id="AY152843">
    <property type="protein sequence ID" value="AAN59979.1"/>
    <property type="molecule type" value="Genomic_DNA"/>
</dbReference>
<dbReference type="EMBL" id="AJ580101">
    <property type="protein sequence ID" value="CAE47106.1"/>
    <property type="molecule type" value="mRNA"/>
</dbReference>
<dbReference type="EMBL" id="AJ580104">
    <property type="protein sequence ID" value="CAE47109.1"/>
    <property type="molecule type" value="mRNA"/>
</dbReference>
<dbReference type="EMBL" id="AJ580105">
    <property type="protein sequence ID" value="CAE47110.1"/>
    <property type="molecule type" value="mRNA"/>
</dbReference>
<dbReference type="PIR" id="S62780">
    <property type="entry name" value="S62780"/>
</dbReference>
<dbReference type="SMR" id="Q10754"/>
<dbReference type="GO" id="GO:0005576">
    <property type="term" value="C:extracellular region"/>
    <property type="evidence" value="ECO:0007669"/>
    <property type="project" value="UniProtKB-SubCell"/>
</dbReference>
<dbReference type="GO" id="GO:0005509">
    <property type="term" value="F:calcium ion binding"/>
    <property type="evidence" value="ECO:0007669"/>
    <property type="project" value="InterPro"/>
</dbReference>
<dbReference type="GO" id="GO:0047498">
    <property type="term" value="F:calcium-dependent phospholipase A2 activity"/>
    <property type="evidence" value="ECO:0007669"/>
    <property type="project" value="TreeGrafter"/>
</dbReference>
<dbReference type="GO" id="GO:0019834">
    <property type="term" value="F:phospholipase A2 inhibitor activity"/>
    <property type="evidence" value="ECO:0007669"/>
    <property type="project" value="UniProtKB-KW"/>
</dbReference>
<dbReference type="GO" id="GO:0005543">
    <property type="term" value="F:phospholipid binding"/>
    <property type="evidence" value="ECO:0007669"/>
    <property type="project" value="TreeGrafter"/>
</dbReference>
<dbReference type="GO" id="GO:0090729">
    <property type="term" value="F:toxin activity"/>
    <property type="evidence" value="ECO:0007669"/>
    <property type="project" value="UniProtKB-KW"/>
</dbReference>
<dbReference type="GO" id="GO:0050482">
    <property type="term" value="P:arachidonate secretion"/>
    <property type="evidence" value="ECO:0007669"/>
    <property type="project" value="InterPro"/>
</dbReference>
<dbReference type="GO" id="GO:0016042">
    <property type="term" value="P:lipid catabolic process"/>
    <property type="evidence" value="ECO:0007669"/>
    <property type="project" value="InterPro"/>
</dbReference>
<dbReference type="GO" id="GO:0042130">
    <property type="term" value="P:negative regulation of T cell proliferation"/>
    <property type="evidence" value="ECO:0007669"/>
    <property type="project" value="TreeGrafter"/>
</dbReference>
<dbReference type="GO" id="GO:0006644">
    <property type="term" value="P:phospholipid metabolic process"/>
    <property type="evidence" value="ECO:0007669"/>
    <property type="project" value="InterPro"/>
</dbReference>
<dbReference type="CDD" id="cd00125">
    <property type="entry name" value="PLA2c"/>
    <property type="match status" value="1"/>
</dbReference>
<dbReference type="FunFam" id="1.20.90.10:FF:000001">
    <property type="entry name" value="Basic phospholipase A2 homolog"/>
    <property type="match status" value="1"/>
</dbReference>
<dbReference type="Gene3D" id="1.20.90.10">
    <property type="entry name" value="Phospholipase A2 domain"/>
    <property type="match status" value="1"/>
</dbReference>
<dbReference type="InterPro" id="IPR001211">
    <property type="entry name" value="PLipase_A2"/>
</dbReference>
<dbReference type="InterPro" id="IPR033112">
    <property type="entry name" value="PLipase_A2_Asp_AS"/>
</dbReference>
<dbReference type="InterPro" id="IPR016090">
    <property type="entry name" value="PLipase_A2_dom"/>
</dbReference>
<dbReference type="InterPro" id="IPR036444">
    <property type="entry name" value="PLipase_A2_dom_sf"/>
</dbReference>
<dbReference type="PANTHER" id="PTHR11716">
    <property type="entry name" value="PHOSPHOLIPASE A2 FAMILY MEMBER"/>
    <property type="match status" value="1"/>
</dbReference>
<dbReference type="PANTHER" id="PTHR11716:SF9">
    <property type="entry name" value="PHOSPHOLIPASE A2, MEMBRANE ASSOCIATED"/>
    <property type="match status" value="1"/>
</dbReference>
<dbReference type="Pfam" id="PF00068">
    <property type="entry name" value="Phospholip_A2_1"/>
    <property type="match status" value="1"/>
</dbReference>
<dbReference type="PRINTS" id="PR00389">
    <property type="entry name" value="PHPHLIPASEA2"/>
</dbReference>
<dbReference type="SMART" id="SM00085">
    <property type="entry name" value="PA2c"/>
    <property type="match status" value="1"/>
</dbReference>
<dbReference type="SUPFAM" id="SSF48619">
    <property type="entry name" value="Phospholipase A2, PLA2"/>
    <property type="match status" value="1"/>
</dbReference>
<dbReference type="PROSITE" id="PS00119">
    <property type="entry name" value="PA2_ASP"/>
    <property type="match status" value="1"/>
</dbReference>
<reference key="1">
    <citation type="journal article" date="2003" name="Eur. J. Biochem.">
        <title>Sequences and structural organization of phospholipase A2 genes from Vipera aspis aspis, V. aspis zinnikeri and Vipera berus berus venom. Identification of the origin of a new viper population based on ammodytin I1 heterogeneity.</title>
        <authorList>
            <person name="Guillemin I."/>
            <person name="Bouchier C."/>
            <person name="Garrigues T."/>
            <person name="Wisner A."/>
            <person name="Choumet V."/>
        </authorList>
    </citation>
    <scope>NUCLEOTIDE SEQUENCE [GENOMIC DNA]</scope>
</reference>
<reference key="2">
    <citation type="journal article" date="2007" name="Toxicon">
        <title>Phospholipase A2 diversity and polymorphism in European viper venoms: paradoxical molecular evolution in Viperinae.</title>
        <authorList>
            <person name="Jan V.M."/>
            <person name="Guillemin I."/>
            <person name="Robbe-Vincent A."/>
            <person name="Choumet V."/>
        </authorList>
    </citation>
    <scope>NUCLEOTIDE SEQUENCE [MRNA]</scope>
    <source>
        <tissue>Venom gland</tissue>
    </source>
</reference>
<reference key="3">
    <citation type="journal article" date="1996" name="Arch. Biochem. Biophys.">
        <title>Complete primary structure of the subunits of heterodimeric phospholipase A2 from Vipera a. zinnikeri venom.</title>
        <authorList>
            <person name="Komori Y."/>
            <person name="Masuda K."/>
            <person name="Nikai T."/>
            <person name="Sugihara H."/>
        </authorList>
    </citation>
    <scope>PROTEIN SEQUENCE OF 17-138</scope>
    <scope>MASS SPECTROMETRY</scope>
    <scope>SUBCELLULAR LOCATION</scope>
    <source>
        <tissue>Venom</tissue>
    </source>
</reference>
<accession>Q10754</accession>
<accession>Q6A3N8</accession>
<sequence length="138" mass="15411">MRTLWIVAVCLIGVEGNLFQFGDMILQKTGKEAVHSYAIYGCYCGWGGQGRAQDATDRCCFAQDCCYGRVNDCNPKMATYTYSFENGDIVCGDNDLCLRAVCECDRAAAICLGENVNTYDKNYEYYSISHCTEESEQC</sequence>
<feature type="signal peptide" evidence="3">
    <location>
        <begin position="1"/>
        <end position="16"/>
    </location>
</feature>
<feature type="chain" id="PRO_0000022976" description="Acidic phospholipase A2 inhibitor vaspin A chain">
    <location>
        <begin position="17"/>
        <end position="138"/>
    </location>
</feature>
<feature type="region of interest" description="Important for membrane-damaging activities in eukaryotes and bacteria; heparin-binding" evidence="2">
    <location>
        <begin position="121"/>
        <end position="133"/>
    </location>
</feature>
<feature type="disulfide bond" evidence="2">
    <location>
        <begin position="42"/>
        <end position="131"/>
    </location>
</feature>
<feature type="disulfide bond" evidence="2">
    <location>
        <begin position="44"/>
        <end position="60"/>
    </location>
</feature>
<feature type="disulfide bond" evidence="2">
    <location>
        <begin position="59"/>
        <end position="111"/>
    </location>
</feature>
<feature type="disulfide bond" evidence="2">
    <location>
        <begin position="65"/>
        <end position="138"/>
    </location>
</feature>
<feature type="disulfide bond" evidence="2">
    <location>
        <begin position="66"/>
        <end position="104"/>
    </location>
</feature>
<feature type="disulfide bond" evidence="2">
    <location>
        <begin position="73"/>
        <end position="97"/>
    </location>
</feature>
<feature type="disulfide bond" evidence="2">
    <location>
        <begin position="91"/>
        <end position="102"/>
    </location>
</feature>
<organism>
    <name type="scientific">Vipera aspis zinnikeri</name>
    <name type="common">Viper</name>
    <dbReference type="NCBI Taxonomy" id="55427"/>
    <lineage>
        <taxon>Eukaryota</taxon>
        <taxon>Metazoa</taxon>
        <taxon>Chordata</taxon>
        <taxon>Craniata</taxon>
        <taxon>Vertebrata</taxon>
        <taxon>Euteleostomi</taxon>
        <taxon>Lepidosauria</taxon>
        <taxon>Squamata</taxon>
        <taxon>Bifurcata</taxon>
        <taxon>Unidentata</taxon>
        <taxon>Episquamata</taxon>
        <taxon>Toxicofera</taxon>
        <taxon>Serpentes</taxon>
        <taxon>Colubroidea</taxon>
        <taxon>Viperidae</taxon>
        <taxon>Viperinae</taxon>
        <taxon>Vipera</taxon>
    </lineage>
</organism>
<evidence type="ECO:0000250" key="1"/>
<evidence type="ECO:0000250" key="2">
    <source>
        <dbReference type="UniProtKB" id="P24605"/>
    </source>
</evidence>
<evidence type="ECO:0000255" key="3"/>
<evidence type="ECO:0000269" key="4">
    <source>
    </source>
</evidence>
<evidence type="ECO:0000305" key="5"/>
<evidence type="ECO:0000305" key="6">
    <source>
    </source>
</evidence>
<proteinExistence type="evidence at protein level"/>